<sequence length="185" mass="20127">MKFKTNKLSLNLVLASSLLAASIPAFAVTGDTDQPIHIESDQQSLDMQGNVVTFTGNVIVTQGTIKINADKVVVTRPGGEQGKEVIDGYGKPATFYQMQDNGKPVEGHASQMHYELAKDFVVLTGNAYLQQVDSNIKGDKITYLVKEQKMQAFSDKGKRVTTVLVPSQLQDKNNKGQTPAQKKGN</sequence>
<feature type="signal peptide" evidence="1">
    <location>
        <begin position="1"/>
        <end position="27"/>
    </location>
</feature>
<feature type="chain" id="PRO_0000043109" description="Lipopolysaccharide export system protein LptA">
    <location>
        <begin position="28"/>
        <end position="185"/>
    </location>
</feature>
<feature type="region of interest" description="Disordered" evidence="2">
    <location>
        <begin position="166"/>
        <end position="185"/>
    </location>
</feature>
<name>LPTA_ECO57</name>
<gene>
    <name evidence="1" type="primary">lptA</name>
    <name type="ordered locus">Z4563</name>
    <name type="ordered locus">ECs4079</name>
</gene>
<evidence type="ECO:0000255" key="1">
    <source>
        <dbReference type="HAMAP-Rule" id="MF_01914"/>
    </source>
</evidence>
<evidence type="ECO:0000256" key="2">
    <source>
        <dbReference type="SAM" id="MobiDB-lite"/>
    </source>
</evidence>
<organism>
    <name type="scientific">Escherichia coli O157:H7</name>
    <dbReference type="NCBI Taxonomy" id="83334"/>
    <lineage>
        <taxon>Bacteria</taxon>
        <taxon>Pseudomonadati</taxon>
        <taxon>Pseudomonadota</taxon>
        <taxon>Gammaproteobacteria</taxon>
        <taxon>Enterobacterales</taxon>
        <taxon>Enterobacteriaceae</taxon>
        <taxon>Escherichia</taxon>
    </lineage>
</organism>
<accession>P0ADV3</accession>
<accession>P38685</accession>
<protein>
    <recommendedName>
        <fullName evidence="1">Lipopolysaccharide export system protein LptA</fullName>
    </recommendedName>
</protein>
<comment type="function">
    <text evidence="1">Involved in the assembly of lipopolysaccharide (LPS). Required for the translocation of LPS from the inner membrane to the outer membrane. May form a bridge between the inner membrane and the outer membrane, via interactions with LptC and LptD, thereby facilitating LPS transfer across the periplasm.</text>
</comment>
<comment type="subunit">
    <text evidence="1">Component of the lipopolysaccharide transport and assembly complex.</text>
</comment>
<comment type="subcellular location">
    <subcellularLocation>
        <location evidence="1">Periplasm</location>
    </subcellularLocation>
</comment>
<comment type="similarity">
    <text evidence="1">Belongs to the LptA family.</text>
</comment>
<proteinExistence type="inferred from homology"/>
<reference key="1">
    <citation type="journal article" date="2001" name="Nature">
        <title>Genome sequence of enterohaemorrhagic Escherichia coli O157:H7.</title>
        <authorList>
            <person name="Perna N.T."/>
            <person name="Plunkett G. III"/>
            <person name="Burland V."/>
            <person name="Mau B."/>
            <person name="Glasner J.D."/>
            <person name="Rose D.J."/>
            <person name="Mayhew G.F."/>
            <person name="Evans P.S."/>
            <person name="Gregor J."/>
            <person name="Kirkpatrick H.A."/>
            <person name="Posfai G."/>
            <person name="Hackett J."/>
            <person name="Klink S."/>
            <person name="Boutin A."/>
            <person name="Shao Y."/>
            <person name="Miller L."/>
            <person name="Grotbeck E.J."/>
            <person name="Davis N.W."/>
            <person name="Lim A."/>
            <person name="Dimalanta E.T."/>
            <person name="Potamousis K."/>
            <person name="Apodaca J."/>
            <person name="Anantharaman T.S."/>
            <person name="Lin J."/>
            <person name="Yen G."/>
            <person name="Schwartz D.C."/>
            <person name="Welch R.A."/>
            <person name="Blattner F.R."/>
        </authorList>
    </citation>
    <scope>NUCLEOTIDE SEQUENCE [LARGE SCALE GENOMIC DNA]</scope>
    <source>
        <strain>O157:H7 / EDL933 / ATCC 700927 / EHEC</strain>
    </source>
</reference>
<reference key="2">
    <citation type="journal article" date="2001" name="DNA Res.">
        <title>Complete genome sequence of enterohemorrhagic Escherichia coli O157:H7 and genomic comparison with a laboratory strain K-12.</title>
        <authorList>
            <person name="Hayashi T."/>
            <person name="Makino K."/>
            <person name="Ohnishi M."/>
            <person name="Kurokawa K."/>
            <person name="Ishii K."/>
            <person name="Yokoyama K."/>
            <person name="Han C.-G."/>
            <person name="Ohtsubo E."/>
            <person name="Nakayama K."/>
            <person name="Murata T."/>
            <person name="Tanaka M."/>
            <person name="Tobe T."/>
            <person name="Iida T."/>
            <person name="Takami H."/>
            <person name="Honda T."/>
            <person name="Sasakawa C."/>
            <person name="Ogasawara N."/>
            <person name="Yasunaga T."/>
            <person name="Kuhara S."/>
            <person name="Shiba T."/>
            <person name="Hattori M."/>
            <person name="Shinagawa H."/>
        </authorList>
    </citation>
    <scope>NUCLEOTIDE SEQUENCE [LARGE SCALE GENOMIC DNA]</scope>
    <source>
        <strain>O157:H7 / Sakai / RIMD 0509952 / EHEC</strain>
    </source>
</reference>
<dbReference type="EMBL" id="AE005174">
    <property type="protein sequence ID" value="AAG58334.1"/>
    <property type="molecule type" value="Genomic_DNA"/>
</dbReference>
<dbReference type="EMBL" id="BA000007">
    <property type="protein sequence ID" value="BAB37502.1"/>
    <property type="molecule type" value="Genomic_DNA"/>
</dbReference>
<dbReference type="PIR" id="B85984">
    <property type="entry name" value="B85984"/>
</dbReference>
<dbReference type="PIR" id="G91138">
    <property type="entry name" value="G91138"/>
</dbReference>
<dbReference type="RefSeq" id="NP_312106.1">
    <property type="nucleotide sequence ID" value="NC_002695.1"/>
</dbReference>
<dbReference type="RefSeq" id="WP_000669785.1">
    <property type="nucleotide sequence ID" value="NZ_VOAI01000014.1"/>
</dbReference>
<dbReference type="SMR" id="P0ADV3"/>
<dbReference type="STRING" id="155864.Z4563"/>
<dbReference type="GeneID" id="916075"/>
<dbReference type="GeneID" id="93778781"/>
<dbReference type="KEGG" id="ece:Z4563"/>
<dbReference type="KEGG" id="ecs:ECs_4079"/>
<dbReference type="PATRIC" id="fig|386585.9.peg.4258"/>
<dbReference type="eggNOG" id="COG1934">
    <property type="taxonomic scope" value="Bacteria"/>
</dbReference>
<dbReference type="HOGENOM" id="CLU_095993_2_1_6"/>
<dbReference type="OMA" id="VPTQQME"/>
<dbReference type="Proteomes" id="UP000000558">
    <property type="component" value="Chromosome"/>
</dbReference>
<dbReference type="Proteomes" id="UP000002519">
    <property type="component" value="Chromosome"/>
</dbReference>
<dbReference type="GO" id="GO:0009279">
    <property type="term" value="C:cell outer membrane"/>
    <property type="evidence" value="ECO:0007669"/>
    <property type="project" value="TreeGrafter"/>
</dbReference>
<dbReference type="GO" id="GO:0030288">
    <property type="term" value="C:outer membrane-bounded periplasmic space"/>
    <property type="evidence" value="ECO:0007669"/>
    <property type="project" value="TreeGrafter"/>
</dbReference>
<dbReference type="GO" id="GO:0017089">
    <property type="term" value="F:glycolipid transfer activity"/>
    <property type="evidence" value="ECO:0007669"/>
    <property type="project" value="TreeGrafter"/>
</dbReference>
<dbReference type="GO" id="GO:0001530">
    <property type="term" value="F:lipopolysaccharide binding"/>
    <property type="evidence" value="ECO:0007669"/>
    <property type="project" value="InterPro"/>
</dbReference>
<dbReference type="GO" id="GO:0043165">
    <property type="term" value="P:Gram-negative-bacterium-type cell outer membrane assembly"/>
    <property type="evidence" value="ECO:0007669"/>
    <property type="project" value="UniProtKB-UniRule"/>
</dbReference>
<dbReference type="GO" id="GO:0015920">
    <property type="term" value="P:lipopolysaccharide transport"/>
    <property type="evidence" value="ECO:0007669"/>
    <property type="project" value="UniProtKB-UniRule"/>
</dbReference>
<dbReference type="FunFam" id="2.60.450.10:FF:000002">
    <property type="entry name" value="Lipopolysaccharide export system protein LptA"/>
    <property type="match status" value="1"/>
</dbReference>
<dbReference type="Gene3D" id="2.60.450.10">
    <property type="entry name" value="Lipopolysaccharide (LPS) transport protein A like domain"/>
    <property type="match status" value="1"/>
</dbReference>
<dbReference type="HAMAP" id="MF_01914">
    <property type="entry name" value="LPS_assembly_LptA"/>
    <property type="match status" value="1"/>
</dbReference>
<dbReference type="InterPro" id="IPR052037">
    <property type="entry name" value="LPS_export_LptA"/>
</dbReference>
<dbReference type="InterPro" id="IPR014340">
    <property type="entry name" value="LptA"/>
</dbReference>
<dbReference type="InterPro" id="IPR005653">
    <property type="entry name" value="OstA-like_N"/>
</dbReference>
<dbReference type="NCBIfam" id="TIGR03002">
    <property type="entry name" value="outer_YhbN_LptA"/>
    <property type="match status" value="1"/>
</dbReference>
<dbReference type="NCBIfam" id="NF008143">
    <property type="entry name" value="PRK10894.1"/>
    <property type="match status" value="1"/>
</dbReference>
<dbReference type="PANTHER" id="PTHR36504">
    <property type="entry name" value="LIPOPOLYSACCHARIDE EXPORT SYSTEM PROTEIN LPTA"/>
    <property type="match status" value="1"/>
</dbReference>
<dbReference type="PANTHER" id="PTHR36504:SF1">
    <property type="entry name" value="LIPOPOLYSACCHARIDE EXPORT SYSTEM PROTEIN LPTA"/>
    <property type="match status" value="1"/>
</dbReference>
<dbReference type="Pfam" id="PF03968">
    <property type="entry name" value="LptD_N"/>
    <property type="match status" value="1"/>
</dbReference>
<keyword id="KW-0574">Periplasm</keyword>
<keyword id="KW-1185">Reference proteome</keyword>
<keyword id="KW-0732">Signal</keyword>
<keyword id="KW-0813">Transport</keyword>